<organism>
    <name type="scientific">Schistocerca gregaria</name>
    <name type="common">Desert locust</name>
    <name type="synonym">Gryllus gregarius</name>
    <dbReference type="NCBI Taxonomy" id="7010"/>
    <lineage>
        <taxon>Eukaryota</taxon>
        <taxon>Metazoa</taxon>
        <taxon>Ecdysozoa</taxon>
        <taxon>Arthropoda</taxon>
        <taxon>Hexapoda</taxon>
        <taxon>Insecta</taxon>
        <taxon>Pterygota</taxon>
        <taxon>Neoptera</taxon>
        <taxon>Polyneoptera</taxon>
        <taxon>Orthoptera</taxon>
        <taxon>Caelifera</taxon>
        <taxon>Acrididea</taxon>
        <taxon>Acridomorpha</taxon>
        <taxon>Acridoidea</taxon>
        <taxon>Acrididae</taxon>
        <taxon>Cyrtacanthacridinae</taxon>
        <taxon>Schistocerca</taxon>
    </lineage>
</organism>
<proteinExistence type="evidence at transcript level"/>
<protein>
    <recommendedName>
        <fullName>Acetylcholine receptor subunit alpha-L1</fullName>
    </recommendedName>
</protein>
<feature type="signal peptide" evidence="2">
    <location>
        <begin position="1"/>
        <end position="23"/>
    </location>
</feature>
<feature type="chain" id="PRO_0000000299" description="Acetylcholine receptor subunit alpha-L1">
    <location>
        <begin position="24"/>
        <end position="557"/>
    </location>
</feature>
<feature type="topological domain" description="Extracellular">
    <location>
        <begin position="24"/>
        <end position="244"/>
    </location>
</feature>
<feature type="transmembrane region" description="Helical">
    <location>
        <begin position="245"/>
        <end position="266"/>
    </location>
</feature>
<feature type="transmembrane region" description="Helical">
    <location>
        <begin position="274"/>
        <end position="294"/>
    </location>
</feature>
<feature type="transmembrane region" description="Helical">
    <location>
        <begin position="308"/>
        <end position="329"/>
    </location>
</feature>
<feature type="topological domain" description="Cytoplasmic">
    <location>
        <begin position="330"/>
        <end position="500"/>
    </location>
</feature>
<feature type="transmembrane region" description="Helical">
    <location>
        <begin position="501"/>
        <end position="523"/>
    </location>
</feature>
<feature type="glycosylation site" description="N-linked (GlcNAc...) asparagine" evidence="2">
    <location>
        <position position="47"/>
    </location>
</feature>
<feature type="glycosylation site" description="N-linked (GlcNAc...) asparagine" evidence="2">
    <location>
        <position position="235"/>
    </location>
</feature>
<feature type="disulfide bond" evidence="1">
    <location>
        <begin position="151"/>
        <end position="165"/>
    </location>
</feature>
<feature type="disulfide bond" description="Associated with receptor activation" evidence="1">
    <location>
        <begin position="224"/>
        <end position="225"/>
    </location>
</feature>
<evidence type="ECO:0000250" key="1"/>
<evidence type="ECO:0000255" key="2"/>
<evidence type="ECO:0000305" key="3"/>
<name>ACH1_SCHGR</name>
<accession>P23414</accession>
<reference key="1">
    <citation type="journal article" date="1990" name="EMBO J.">
        <title>Sequence and functional expression of a single alpha subunit of an insect nicotinic acetylcholine receptor.</title>
        <authorList>
            <person name="Marshall J."/>
            <person name="Buckingham S.D."/>
            <person name="Shingai R."/>
            <person name="Lunt G.G."/>
            <person name="Goosey M.W."/>
            <person name="Darlison M.G."/>
            <person name="Sattelle D.B."/>
            <person name="Barnard E.A."/>
        </authorList>
    </citation>
    <scope>NUCLEOTIDE SEQUENCE [MRNA]</scope>
</reference>
<dbReference type="EMBL" id="X55439">
    <property type="protein sequence ID" value="CAA39081.1"/>
    <property type="molecule type" value="mRNA"/>
</dbReference>
<dbReference type="PIR" id="S12359">
    <property type="entry name" value="S12359"/>
</dbReference>
<dbReference type="SMR" id="P23414"/>
<dbReference type="OrthoDB" id="5975154at2759"/>
<dbReference type="GO" id="GO:0045211">
    <property type="term" value="C:postsynaptic membrane"/>
    <property type="evidence" value="ECO:0007669"/>
    <property type="project" value="UniProtKB-SubCell"/>
</dbReference>
<dbReference type="GO" id="GO:0022848">
    <property type="term" value="F:acetylcholine-gated monoatomic cation-selective channel activity"/>
    <property type="evidence" value="ECO:0007669"/>
    <property type="project" value="InterPro"/>
</dbReference>
<dbReference type="GO" id="GO:0004888">
    <property type="term" value="F:transmembrane signaling receptor activity"/>
    <property type="evidence" value="ECO:0007669"/>
    <property type="project" value="InterPro"/>
</dbReference>
<dbReference type="CDD" id="cd19031">
    <property type="entry name" value="LGIC_ECD_nAChR_proto_alpha-like"/>
    <property type="match status" value="1"/>
</dbReference>
<dbReference type="CDD" id="cd19064">
    <property type="entry name" value="LGIC_TM_nAChR"/>
    <property type="match status" value="1"/>
</dbReference>
<dbReference type="FunFam" id="2.70.170.10:FF:000013">
    <property type="entry name" value="Acetylcholine receptor subunit alpha"/>
    <property type="match status" value="1"/>
</dbReference>
<dbReference type="FunFam" id="1.20.58.390:FF:000030">
    <property type="entry name" value="Acetylcholine receptor subunit alpha-L1"/>
    <property type="match status" value="1"/>
</dbReference>
<dbReference type="FunFam" id="1.20.58.390:FF:000012">
    <property type="entry name" value="Acetylcholine receptor subunit alpha-like"/>
    <property type="match status" value="1"/>
</dbReference>
<dbReference type="Gene3D" id="2.70.170.10">
    <property type="entry name" value="Neurotransmitter-gated ion-channel ligand-binding domain"/>
    <property type="match status" value="1"/>
</dbReference>
<dbReference type="Gene3D" id="1.20.58.390">
    <property type="entry name" value="Neurotransmitter-gated ion-channel transmembrane domain"/>
    <property type="match status" value="2"/>
</dbReference>
<dbReference type="InterPro" id="IPR006202">
    <property type="entry name" value="Neur_chan_lig-bd"/>
</dbReference>
<dbReference type="InterPro" id="IPR036734">
    <property type="entry name" value="Neur_chan_lig-bd_sf"/>
</dbReference>
<dbReference type="InterPro" id="IPR006201">
    <property type="entry name" value="Neur_channel"/>
</dbReference>
<dbReference type="InterPro" id="IPR036719">
    <property type="entry name" value="Neuro-gated_channel_TM_sf"/>
</dbReference>
<dbReference type="InterPro" id="IPR038050">
    <property type="entry name" value="Neuro_actylchol_rec"/>
</dbReference>
<dbReference type="InterPro" id="IPR006029">
    <property type="entry name" value="Neurotrans-gated_channel_TM"/>
</dbReference>
<dbReference type="InterPro" id="IPR018000">
    <property type="entry name" value="Neurotransmitter_ion_chnl_CS"/>
</dbReference>
<dbReference type="InterPro" id="IPR002394">
    <property type="entry name" value="Nicotinic_acetylcholine_rcpt"/>
</dbReference>
<dbReference type="NCBIfam" id="TIGR00860">
    <property type="entry name" value="LIC"/>
    <property type="match status" value="1"/>
</dbReference>
<dbReference type="PANTHER" id="PTHR18945">
    <property type="entry name" value="NEUROTRANSMITTER GATED ION CHANNEL"/>
    <property type="match status" value="1"/>
</dbReference>
<dbReference type="Pfam" id="PF02931">
    <property type="entry name" value="Neur_chan_LBD"/>
    <property type="match status" value="1"/>
</dbReference>
<dbReference type="Pfam" id="PF02932">
    <property type="entry name" value="Neur_chan_memb"/>
    <property type="match status" value="1"/>
</dbReference>
<dbReference type="PRINTS" id="PR00254">
    <property type="entry name" value="NICOTINICR"/>
</dbReference>
<dbReference type="PRINTS" id="PR00252">
    <property type="entry name" value="NRIONCHANNEL"/>
</dbReference>
<dbReference type="SUPFAM" id="SSF90112">
    <property type="entry name" value="Neurotransmitter-gated ion-channel transmembrane pore"/>
    <property type="match status" value="1"/>
</dbReference>
<dbReference type="SUPFAM" id="SSF63712">
    <property type="entry name" value="Nicotinic receptor ligand binding domain-like"/>
    <property type="match status" value="1"/>
</dbReference>
<dbReference type="PROSITE" id="PS00236">
    <property type="entry name" value="NEUROTR_ION_CHANNEL"/>
    <property type="match status" value="1"/>
</dbReference>
<keyword id="KW-1003">Cell membrane</keyword>
<keyword id="KW-1015">Disulfide bond</keyword>
<keyword id="KW-0325">Glycoprotein</keyword>
<keyword id="KW-0407">Ion channel</keyword>
<keyword id="KW-0406">Ion transport</keyword>
<keyword id="KW-1071">Ligand-gated ion channel</keyword>
<keyword id="KW-0472">Membrane</keyword>
<keyword id="KW-0628">Postsynaptic cell membrane</keyword>
<keyword id="KW-0675">Receptor</keyword>
<keyword id="KW-0732">Signal</keyword>
<keyword id="KW-0770">Synapse</keyword>
<keyword id="KW-0812">Transmembrane</keyword>
<keyword id="KW-1133">Transmembrane helix</keyword>
<keyword id="KW-0813">Transport</keyword>
<sequence>MAAALPPMLLLLLLLLLHHPAAANPDAKRLYDDLLSNYNRLIRPVSNNTDTVLVKLGLRLSQLIDLNLKDQILTTNVWLEHEWQDHKFRWDPAEYGGVTELYVPSEHIWLPDIVLYNNADGEYVVTTMTKAVLHHTGKVVWTPPAIFKSSCEIDVRYFPFDQQTCFMKFGSWTYDGDQIDLKHINQKYDDNKVKVGIDLREYYPSVEWDILGVPAERHEKYYPCCAEPYPDIFFNITLRRKTLFYTVNLIVPCVGISYLSVLVFYLPADSGEKIALCISILLSQTMFFLLISEIIPSTSLALPLLGKYLLFTMVLVGLSVVITIMVLNVHYRKPSTHKMAPWVRKVFIRRLPKLLLMRVPEQLLADLASKRLLRHAHNSKLSAAAAAAVAAAASSSAASSPDSLRHHHLHQHQHQHHLQLHHLQRPGGCNGLHSATNRFGGSAGAFGGLPSVVGLDGSLSDVATRKKYPFELEKAIHNVLFIQNHMQRQDEFDAEDQDWGFVAMVLDRLFLWIFTIASIVGTFAILCEAPALYDDTKPIDMELSSVAQQQFLPDIDF</sequence>
<comment type="function">
    <text>After binding acetylcholine, the AChR responds by an extensive change in conformation that affects all subunits and leads to opening of an ion-conducting channel across the plasma membrane.</text>
</comment>
<comment type="subcellular location">
    <subcellularLocation>
        <location>Postsynaptic cell membrane</location>
        <topology>Multi-pass membrane protein</topology>
    </subcellularLocation>
    <subcellularLocation>
        <location>Cell membrane</location>
        <topology>Multi-pass membrane protein</topology>
    </subcellularLocation>
</comment>
<comment type="similarity">
    <text evidence="3">Belongs to the ligand-gated ion channel (TC 1.A.9) family. Acetylcholine receptor (TC 1.A.9.1) subfamily.</text>
</comment>